<comment type="function">
    <text evidence="4 5">Can hydrolyze glycol chitin and chitin oligosaccharides (e.g. N-acetylglucosamine) (GlcNAc)4, (GlcNAc)5 and (GlcNAc)6 (PubMed:21390509, PubMed:22936594). Hydrolyzes N-acetylglucosamine oligomers producing dimers from the non-reducing end of the substrates (PubMed:21390509).</text>
</comment>
<comment type="catalytic activity">
    <reaction evidence="4 5">
        <text>Random endo-hydrolysis of N-acetyl-beta-D-glucosaminide (1-&gt;4)-beta-linkages in chitin and chitodextrins.</text>
        <dbReference type="EC" id="3.2.1.14"/>
    </reaction>
</comment>
<comment type="catalytic activity">
    <reaction evidence="4">
        <text>Hydrolysis of N,N'-diacetylchitobiose from the non-reducing end of chitin and chitodextrins.</text>
        <dbReference type="EC" id="3.2.1.200"/>
    </reaction>
</comment>
<comment type="pathway">
    <text evidence="4 5">Glycan degradation; chitin degradation.</text>
</comment>
<comment type="alternative products">
    <event type="alternative splicing"/>
    <isoform>
        <id>O81862-1</id>
        <name>1</name>
        <sequence type="displayed"/>
    </isoform>
    <isoform>
        <id>O81862-2</id>
        <name>2</name>
        <sequence type="described" ref="VSP_059331"/>
    </isoform>
</comment>
<comment type="induction">
    <text evidence="4">Induced by jasmonic acid (JA), abscisic acid (ABA) and salt (NaCl).</text>
</comment>
<comment type="similarity">
    <text evidence="7">Belongs to the glycosyl hydrolase 18 family. Chitinase class V subfamily.</text>
</comment>
<dbReference type="EC" id="3.2.1.14" evidence="4 5"/>
<dbReference type="EC" id="3.2.1.200" evidence="4"/>
<dbReference type="EMBL" id="AL024486">
    <property type="protein sequence ID" value="CAA19698.1"/>
    <property type="molecule type" value="Genomic_DNA"/>
</dbReference>
<dbReference type="EMBL" id="AL161551">
    <property type="protein sequence ID" value="CAB78983.1"/>
    <property type="molecule type" value="Genomic_DNA"/>
</dbReference>
<dbReference type="EMBL" id="CP002687">
    <property type="protein sequence ID" value="AEE84228.1"/>
    <property type="molecule type" value="Genomic_DNA"/>
</dbReference>
<dbReference type="EMBL" id="CP002687">
    <property type="protein sequence ID" value="ANM66365.1"/>
    <property type="molecule type" value="Genomic_DNA"/>
</dbReference>
<dbReference type="EMBL" id="BT029539">
    <property type="protein sequence ID" value="ABL66795.1"/>
    <property type="molecule type" value="mRNA"/>
</dbReference>
<dbReference type="EMBL" id="AK227762">
    <property type="protein sequence ID" value="BAE99745.1"/>
    <property type="molecule type" value="mRNA"/>
</dbReference>
<dbReference type="PIR" id="T04762">
    <property type="entry name" value="T04762"/>
</dbReference>
<dbReference type="RefSeq" id="NP_001319999.1">
    <molecule id="O81862-1"/>
    <property type="nucleotide sequence ID" value="NM_001341373.1"/>
</dbReference>
<dbReference type="RefSeq" id="NP_193716.1">
    <molecule id="O81862-1"/>
    <property type="nucleotide sequence ID" value="NM_118101.4"/>
</dbReference>
<dbReference type="PDB" id="3AQU">
    <property type="method" value="X-ray"/>
    <property type="resolution" value="2.01 A"/>
    <property type="chains" value="A/B/C/D=25-379"/>
</dbReference>
<dbReference type="PDBsum" id="3AQU"/>
<dbReference type="SMR" id="O81862"/>
<dbReference type="FunCoup" id="O81862">
    <property type="interactions" value="309"/>
</dbReference>
<dbReference type="IntAct" id="O81862">
    <property type="interactions" value="1"/>
</dbReference>
<dbReference type="STRING" id="3702.O81862"/>
<dbReference type="CAZy" id="GH18">
    <property type="family name" value="Glycoside Hydrolase Family 18"/>
</dbReference>
<dbReference type="GlyCosmos" id="O81862">
    <property type="glycosylation" value="2 sites, No reported glycans"/>
</dbReference>
<dbReference type="GlyGen" id="O81862">
    <property type="glycosylation" value="2 sites"/>
</dbReference>
<dbReference type="PaxDb" id="3702-AT4G19810.1"/>
<dbReference type="ProteomicsDB" id="240891">
    <molecule id="O81862-1"/>
</dbReference>
<dbReference type="EnsemblPlants" id="AT4G19810.1">
    <molecule id="O81862-1"/>
    <property type="protein sequence ID" value="AT4G19810.1"/>
    <property type="gene ID" value="AT4G19810"/>
</dbReference>
<dbReference type="EnsemblPlants" id="AT4G19810.2">
    <molecule id="O81862-1"/>
    <property type="protein sequence ID" value="AT4G19810.2"/>
    <property type="gene ID" value="AT4G19810"/>
</dbReference>
<dbReference type="GeneID" id="827725"/>
<dbReference type="Gramene" id="AT4G19810.1">
    <molecule id="O81862-1"/>
    <property type="protein sequence ID" value="AT4G19810.1"/>
    <property type="gene ID" value="AT4G19810"/>
</dbReference>
<dbReference type="Gramene" id="AT4G19810.2">
    <molecule id="O81862-1"/>
    <property type="protein sequence ID" value="AT4G19810.2"/>
    <property type="gene ID" value="AT4G19810"/>
</dbReference>
<dbReference type="KEGG" id="ath:AT4G19810"/>
<dbReference type="Araport" id="AT4G19810"/>
<dbReference type="TAIR" id="AT4G19810">
    <property type="gene designation" value="CHIC"/>
</dbReference>
<dbReference type="eggNOG" id="KOG2806">
    <property type="taxonomic scope" value="Eukaryota"/>
</dbReference>
<dbReference type="HOGENOM" id="CLU_002833_3_2_1"/>
<dbReference type="InParanoid" id="O81862"/>
<dbReference type="OMA" id="GATRYWD"/>
<dbReference type="PhylomeDB" id="O81862"/>
<dbReference type="BioCyc" id="ARA:AT4G19810-MONOMER"/>
<dbReference type="BioCyc" id="MetaCyc:AT4G19810-MONOMER"/>
<dbReference type="BRENDA" id="3.2.1.14">
    <property type="organism ID" value="399"/>
</dbReference>
<dbReference type="BRENDA" id="3.2.1.200">
    <property type="organism ID" value="399"/>
</dbReference>
<dbReference type="UniPathway" id="UPA00349"/>
<dbReference type="EvolutionaryTrace" id="O81862"/>
<dbReference type="PRO" id="PR:O81862"/>
<dbReference type="Proteomes" id="UP000006548">
    <property type="component" value="Chromosome 4"/>
</dbReference>
<dbReference type="ExpressionAtlas" id="O81862">
    <property type="expression patterns" value="baseline and differential"/>
</dbReference>
<dbReference type="GO" id="GO:0099503">
    <property type="term" value="C:secretory vesicle"/>
    <property type="evidence" value="ECO:0007005"/>
    <property type="project" value="TAIR"/>
</dbReference>
<dbReference type="GO" id="GO:0008061">
    <property type="term" value="F:chitin binding"/>
    <property type="evidence" value="ECO:0007669"/>
    <property type="project" value="InterPro"/>
</dbReference>
<dbReference type="GO" id="GO:0004568">
    <property type="term" value="F:chitinase activity"/>
    <property type="evidence" value="ECO:0000314"/>
    <property type="project" value="UniProtKB"/>
</dbReference>
<dbReference type="GO" id="GO:0008843">
    <property type="term" value="F:endochitinase activity"/>
    <property type="evidence" value="ECO:0000314"/>
    <property type="project" value="TAIR"/>
</dbReference>
<dbReference type="GO" id="GO:0035885">
    <property type="term" value="F:exochitinase activity"/>
    <property type="evidence" value="ECO:0000314"/>
    <property type="project" value="TAIR"/>
</dbReference>
<dbReference type="GO" id="GO:0006032">
    <property type="term" value="P:chitin catabolic process"/>
    <property type="evidence" value="ECO:0000314"/>
    <property type="project" value="TAIR"/>
</dbReference>
<dbReference type="GO" id="GO:0000272">
    <property type="term" value="P:polysaccharide catabolic process"/>
    <property type="evidence" value="ECO:0007669"/>
    <property type="project" value="UniProtKB-KW"/>
</dbReference>
<dbReference type="GO" id="GO:0009737">
    <property type="term" value="P:response to abscisic acid"/>
    <property type="evidence" value="ECO:0000270"/>
    <property type="project" value="TAIR"/>
</dbReference>
<dbReference type="GO" id="GO:0009753">
    <property type="term" value="P:response to jasmonic acid"/>
    <property type="evidence" value="ECO:0000270"/>
    <property type="project" value="TAIR"/>
</dbReference>
<dbReference type="GO" id="GO:0009651">
    <property type="term" value="P:response to salt stress"/>
    <property type="evidence" value="ECO:0000270"/>
    <property type="project" value="TAIR"/>
</dbReference>
<dbReference type="CDD" id="cd02879">
    <property type="entry name" value="GH18_plant_chitinase_class_V"/>
    <property type="match status" value="1"/>
</dbReference>
<dbReference type="FunFam" id="3.20.20.80:FF:000091">
    <property type="entry name" value="Class V chitinase CHIT5"/>
    <property type="match status" value="1"/>
</dbReference>
<dbReference type="FunFam" id="3.10.50.10:FF:000003">
    <property type="entry name" value="Class V chitinase CHIT5b"/>
    <property type="match status" value="1"/>
</dbReference>
<dbReference type="Gene3D" id="3.10.50.10">
    <property type="match status" value="1"/>
</dbReference>
<dbReference type="Gene3D" id="3.20.20.80">
    <property type="entry name" value="Glycosidases"/>
    <property type="match status" value="1"/>
</dbReference>
<dbReference type="InterPro" id="IPR011583">
    <property type="entry name" value="Chitinase_II/V-like_cat"/>
</dbReference>
<dbReference type="InterPro" id="IPR029070">
    <property type="entry name" value="Chitinase_insertion_sf"/>
</dbReference>
<dbReference type="InterPro" id="IPR001223">
    <property type="entry name" value="Glyco_hydro18_cat"/>
</dbReference>
<dbReference type="InterPro" id="IPR017853">
    <property type="entry name" value="Glycoside_hydrolase_SF"/>
</dbReference>
<dbReference type="InterPro" id="IPR050314">
    <property type="entry name" value="Glycosyl_Hydrlase_18"/>
</dbReference>
<dbReference type="PANTHER" id="PTHR11177">
    <property type="entry name" value="CHITINASE"/>
    <property type="match status" value="1"/>
</dbReference>
<dbReference type="PANTHER" id="PTHR11177:SF393">
    <property type="entry name" value="CHITINASE-LIKE PROTEIN-RELATED"/>
    <property type="match status" value="1"/>
</dbReference>
<dbReference type="Pfam" id="PF00704">
    <property type="entry name" value="Glyco_hydro_18"/>
    <property type="match status" value="1"/>
</dbReference>
<dbReference type="SMART" id="SM00636">
    <property type="entry name" value="Glyco_18"/>
    <property type="match status" value="1"/>
</dbReference>
<dbReference type="SUPFAM" id="SSF51445">
    <property type="entry name" value="(Trans)glycosidases"/>
    <property type="match status" value="1"/>
</dbReference>
<dbReference type="SUPFAM" id="SSF54556">
    <property type="entry name" value="Chitinase insertion domain"/>
    <property type="match status" value="1"/>
</dbReference>
<dbReference type="PROSITE" id="PS51910">
    <property type="entry name" value="GH18_2"/>
    <property type="match status" value="1"/>
</dbReference>
<feature type="signal peptide" evidence="1">
    <location>
        <begin position="1"/>
        <end position="24"/>
    </location>
</feature>
<feature type="chain" id="PRO_5011420228" description="Class V chitinase">
    <location>
        <begin position="25"/>
        <end position="379"/>
    </location>
</feature>
<feature type="domain" description="GH18" evidence="3">
    <location>
        <begin position="27"/>
        <end position="369"/>
    </location>
</feature>
<feature type="active site" description="Proton donor" evidence="3 8">
    <location>
        <position position="140"/>
    </location>
</feature>
<feature type="binding site" evidence="8">
    <location>
        <position position="99"/>
    </location>
    <ligand>
        <name>chitin</name>
        <dbReference type="ChEBI" id="CHEBI:17029"/>
    </ligand>
</feature>
<feature type="binding site" evidence="8">
    <location>
        <position position="259"/>
    </location>
    <ligand>
        <name>chitin</name>
        <dbReference type="ChEBI" id="CHEBI:17029"/>
    </ligand>
</feature>
<feature type="binding site" evidence="3 8">
    <location>
        <position position="348"/>
    </location>
    <ligand>
        <name>chitin</name>
        <dbReference type="ChEBI" id="CHEBI:17029"/>
    </ligand>
</feature>
<feature type="glycosylation site" description="N-linked (GlcNAc...) asparagine" evidence="2">
    <location>
        <position position="307"/>
    </location>
</feature>
<feature type="glycosylation site" description="N-linked (GlcNAc...) asparagine" evidence="2">
    <location>
        <position position="327"/>
    </location>
</feature>
<feature type="splice variant" id="VSP_059331" description="In isoform 2.">
    <location>
        <begin position="17"/>
        <end position="58"/>
    </location>
</feature>
<feature type="mutagenesis site" description="Reduced activity toward glycol chitin, but enhanced transglycosylation reaction toward chitin oligosaccharides (GlcNAc)4, (GlcNAc)5 and (GlcNAc)6." evidence="5">
    <original>G</original>
    <variation>W</variation>
    <location>
        <position position="99"/>
    </location>
</feature>
<feature type="mutagenesis site" description="Loss of activity and increased association constant for (GlcNAc)5." evidence="5">
    <original>E</original>
    <variation>Q</variation>
    <location>
        <position position="140"/>
    </location>
</feature>
<feature type="sequence conflict" description="In Ref. 4; BAE99745." evidence="7" ref="4">
    <original>N</original>
    <variation>S</variation>
    <location>
        <position position="307"/>
    </location>
</feature>
<feature type="strand" evidence="11">
    <location>
        <begin position="28"/>
        <end position="33"/>
    </location>
</feature>
<feature type="helix" evidence="11">
    <location>
        <begin position="35"/>
        <end position="37"/>
    </location>
</feature>
<feature type="helix" evidence="11">
    <location>
        <begin position="41"/>
        <end position="43"/>
    </location>
</feature>
<feature type="helix" evidence="11">
    <location>
        <begin position="46"/>
        <end position="48"/>
    </location>
</feature>
<feature type="strand" evidence="11">
    <location>
        <begin position="50"/>
        <end position="60"/>
    </location>
</feature>
<feature type="turn" evidence="11">
    <location>
        <begin position="61"/>
        <end position="64"/>
    </location>
</feature>
<feature type="strand" evidence="11">
    <location>
        <begin position="65"/>
        <end position="67"/>
    </location>
</feature>
<feature type="turn" evidence="11">
    <location>
        <begin position="70"/>
        <end position="72"/>
    </location>
</feature>
<feature type="helix" evidence="11">
    <location>
        <begin position="73"/>
        <end position="83"/>
    </location>
</feature>
<feature type="turn" evidence="11">
    <location>
        <begin position="84"/>
        <end position="86"/>
    </location>
</feature>
<feature type="strand" evidence="11">
    <location>
        <begin position="91"/>
        <end position="97"/>
    </location>
</feature>
<feature type="helix" evidence="11">
    <location>
        <begin position="103"/>
        <end position="111"/>
    </location>
</feature>
<feature type="helix" evidence="11">
    <location>
        <begin position="113"/>
        <end position="130"/>
    </location>
</feature>
<feature type="strand" evidence="11">
    <location>
        <begin position="133"/>
        <end position="138"/>
    </location>
</feature>
<feature type="helix" evidence="11">
    <location>
        <begin position="145"/>
        <end position="169"/>
    </location>
</feature>
<feature type="strand" evidence="11">
    <location>
        <begin position="175"/>
        <end position="186"/>
    </location>
</feature>
<feature type="helix" evidence="11">
    <location>
        <begin position="193"/>
        <end position="199"/>
    </location>
</feature>
<feature type="strand" evidence="11">
    <location>
        <begin position="201"/>
        <end position="206"/>
    </location>
</feature>
<feature type="turn" evidence="11">
    <location>
        <begin position="213"/>
        <end position="215"/>
    </location>
</feature>
<feature type="helix" evidence="11">
    <location>
        <begin position="235"/>
        <end position="244"/>
    </location>
</feature>
<feature type="helix" evidence="11">
    <location>
        <begin position="249"/>
        <end position="251"/>
    </location>
</feature>
<feature type="strand" evidence="11">
    <location>
        <begin position="252"/>
        <end position="266"/>
    </location>
</feature>
<feature type="strand" evidence="11">
    <location>
        <begin position="276"/>
        <end position="280"/>
    </location>
</feature>
<feature type="strand" evidence="11">
    <location>
        <begin position="287"/>
        <end position="289"/>
    </location>
</feature>
<feature type="helix" evidence="11">
    <location>
        <begin position="290"/>
        <end position="300"/>
    </location>
</feature>
<feature type="strand" evidence="11">
    <location>
        <begin position="303"/>
        <end position="307"/>
    </location>
</feature>
<feature type="turn" evidence="11">
    <location>
        <begin position="308"/>
        <end position="311"/>
    </location>
</feature>
<feature type="strand" evidence="11">
    <location>
        <begin position="312"/>
        <end position="317"/>
    </location>
</feature>
<feature type="strand" evidence="11">
    <location>
        <begin position="320"/>
        <end position="324"/>
    </location>
</feature>
<feature type="helix" evidence="11">
    <location>
        <begin position="327"/>
        <end position="339"/>
    </location>
</feature>
<feature type="strand" evidence="11">
    <location>
        <begin position="344"/>
        <end position="348"/>
    </location>
</feature>
<feature type="helix" evidence="11">
    <location>
        <begin position="350"/>
        <end position="352"/>
    </location>
</feature>
<feature type="helix" evidence="11">
    <location>
        <begin position="357"/>
        <end position="368"/>
    </location>
</feature>
<accession>O81862</accession>
<accession>Q0WT03</accession>
<name>CHIC_ARATH</name>
<proteinExistence type="evidence at protein level"/>
<reference key="1">
    <citation type="journal article" date="1999" name="Nature">
        <title>Sequence and analysis of chromosome 4 of the plant Arabidopsis thaliana.</title>
        <authorList>
            <person name="Mayer K.F.X."/>
            <person name="Schueller C."/>
            <person name="Wambutt R."/>
            <person name="Murphy G."/>
            <person name="Volckaert G."/>
            <person name="Pohl T."/>
            <person name="Duesterhoeft A."/>
            <person name="Stiekema W."/>
            <person name="Entian K.-D."/>
            <person name="Terryn N."/>
            <person name="Harris B."/>
            <person name="Ansorge W."/>
            <person name="Brandt P."/>
            <person name="Grivell L.A."/>
            <person name="Rieger M."/>
            <person name="Weichselgartner M."/>
            <person name="de Simone V."/>
            <person name="Obermaier B."/>
            <person name="Mache R."/>
            <person name="Mueller M."/>
            <person name="Kreis M."/>
            <person name="Delseny M."/>
            <person name="Puigdomenech P."/>
            <person name="Watson M."/>
            <person name="Schmidtheini T."/>
            <person name="Reichert B."/>
            <person name="Portetelle D."/>
            <person name="Perez-Alonso M."/>
            <person name="Boutry M."/>
            <person name="Bancroft I."/>
            <person name="Vos P."/>
            <person name="Hoheisel J."/>
            <person name="Zimmermann W."/>
            <person name="Wedler H."/>
            <person name="Ridley P."/>
            <person name="Langham S.-A."/>
            <person name="McCullagh B."/>
            <person name="Bilham L."/>
            <person name="Robben J."/>
            <person name="van der Schueren J."/>
            <person name="Grymonprez B."/>
            <person name="Chuang Y.-J."/>
            <person name="Vandenbussche F."/>
            <person name="Braeken M."/>
            <person name="Weltjens I."/>
            <person name="Voet M."/>
            <person name="Bastiaens I."/>
            <person name="Aert R."/>
            <person name="Defoor E."/>
            <person name="Weitzenegger T."/>
            <person name="Bothe G."/>
            <person name="Ramsperger U."/>
            <person name="Hilbert H."/>
            <person name="Braun M."/>
            <person name="Holzer E."/>
            <person name="Brandt A."/>
            <person name="Peters S."/>
            <person name="van Staveren M."/>
            <person name="Dirkse W."/>
            <person name="Mooijman P."/>
            <person name="Klein Lankhorst R."/>
            <person name="Rose M."/>
            <person name="Hauf J."/>
            <person name="Koetter P."/>
            <person name="Berneiser S."/>
            <person name="Hempel S."/>
            <person name="Feldpausch M."/>
            <person name="Lamberth S."/>
            <person name="Van den Daele H."/>
            <person name="De Keyser A."/>
            <person name="Buysshaert C."/>
            <person name="Gielen J."/>
            <person name="Villarroel R."/>
            <person name="De Clercq R."/>
            <person name="van Montagu M."/>
            <person name="Rogers J."/>
            <person name="Cronin A."/>
            <person name="Quail M.A."/>
            <person name="Bray-Allen S."/>
            <person name="Clark L."/>
            <person name="Doggett J."/>
            <person name="Hall S."/>
            <person name="Kay M."/>
            <person name="Lennard N."/>
            <person name="McLay K."/>
            <person name="Mayes R."/>
            <person name="Pettett A."/>
            <person name="Rajandream M.A."/>
            <person name="Lyne M."/>
            <person name="Benes V."/>
            <person name="Rechmann S."/>
            <person name="Borkova D."/>
            <person name="Bloecker H."/>
            <person name="Scharfe M."/>
            <person name="Grimm M."/>
            <person name="Loehnert T.-H."/>
            <person name="Dose S."/>
            <person name="de Haan M."/>
            <person name="Maarse A.C."/>
            <person name="Schaefer M."/>
            <person name="Mueller-Auer S."/>
            <person name="Gabel C."/>
            <person name="Fuchs M."/>
            <person name="Fartmann B."/>
            <person name="Granderath K."/>
            <person name="Dauner D."/>
            <person name="Herzl A."/>
            <person name="Neumann S."/>
            <person name="Argiriou A."/>
            <person name="Vitale D."/>
            <person name="Liguori R."/>
            <person name="Piravandi E."/>
            <person name="Massenet O."/>
            <person name="Quigley F."/>
            <person name="Clabauld G."/>
            <person name="Muendlein A."/>
            <person name="Felber R."/>
            <person name="Schnabl S."/>
            <person name="Hiller R."/>
            <person name="Schmidt W."/>
            <person name="Lecharny A."/>
            <person name="Aubourg S."/>
            <person name="Chefdor F."/>
            <person name="Cooke R."/>
            <person name="Berger C."/>
            <person name="Monfort A."/>
            <person name="Casacuberta E."/>
            <person name="Gibbons T."/>
            <person name="Weber N."/>
            <person name="Vandenbol M."/>
            <person name="Bargues M."/>
            <person name="Terol J."/>
            <person name="Torres A."/>
            <person name="Perez-Perez A."/>
            <person name="Purnelle B."/>
            <person name="Bent E."/>
            <person name="Johnson S."/>
            <person name="Tacon D."/>
            <person name="Jesse T."/>
            <person name="Heijnen L."/>
            <person name="Schwarz S."/>
            <person name="Scholler P."/>
            <person name="Heber S."/>
            <person name="Francs P."/>
            <person name="Bielke C."/>
            <person name="Frishman D."/>
            <person name="Haase D."/>
            <person name="Lemcke K."/>
            <person name="Mewes H.-W."/>
            <person name="Stocker S."/>
            <person name="Zaccaria P."/>
            <person name="Bevan M."/>
            <person name="Wilson R.K."/>
            <person name="de la Bastide M."/>
            <person name="Habermann K."/>
            <person name="Parnell L."/>
            <person name="Dedhia N."/>
            <person name="Gnoj L."/>
            <person name="Schutz K."/>
            <person name="Huang E."/>
            <person name="Spiegel L."/>
            <person name="Sekhon M."/>
            <person name="Murray J."/>
            <person name="Sheet P."/>
            <person name="Cordes M."/>
            <person name="Abu-Threideh J."/>
            <person name="Stoneking T."/>
            <person name="Kalicki J."/>
            <person name="Graves T."/>
            <person name="Harmon G."/>
            <person name="Edwards J."/>
            <person name="Latreille P."/>
            <person name="Courtney L."/>
            <person name="Cloud J."/>
            <person name="Abbott A."/>
            <person name="Scott K."/>
            <person name="Johnson D."/>
            <person name="Minx P."/>
            <person name="Bentley D."/>
            <person name="Fulton B."/>
            <person name="Miller N."/>
            <person name="Greco T."/>
            <person name="Kemp K."/>
            <person name="Kramer J."/>
            <person name="Fulton L."/>
            <person name="Mardis E."/>
            <person name="Dante M."/>
            <person name="Pepin K."/>
            <person name="Hillier L.W."/>
            <person name="Nelson J."/>
            <person name="Spieth J."/>
            <person name="Ryan E."/>
            <person name="Andrews S."/>
            <person name="Geisel C."/>
            <person name="Layman D."/>
            <person name="Du H."/>
            <person name="Ali J."/>
            <person name="Berghoff A."/>
            <person name="Jones K."/>
            <person name="Drone K."/>
            <person name="Cotton M."/>
            <person name="Joshu C."/>
            <person name="Antonoiu B."/>
            <person name="Zidanic M."/>
            <person name="Strong C."/>
            <person name="Sun H."/>
            <person name="Lamar B."/>
            <person name="Yordan C."/>
            <person name="Ma P."/>
            <person name="Zhong J."/>
            <person name="Preston R."/>
            <person name="Vil D."/>
            <person name="Shekher M."/>
            <person name="Matero A."/>
            <person name="Shah R."/>
            <person name="Swaby I.K."/>
            <person name="O'Shaughnessy A."/>
            <person name="Rodriguez M."/>
            <person name="Hoffman J."/>
            <person name="Till S."/>
            <person name="Granat S."/>
            <person name="Shohdy N."/>
            <person name="Hasegawa A."/>
            <person name="Hameed A."/>
            <person name="Lodhi M."/>
            <person name="Johnson A."/>
            <person name="Chen E."/>
            <person name="Marra M.A."/>
            <person name="Martienssen R."/>
            <person name="McCombie W.R."/>
        </authorList>
    </citation>
    <scope>NUCLEOTIDE SEQUENCE [LARGE SCALE GENOMIC DNA]</scope>
    <source>
        <strain>cv. Columbia</strain>
    </source>
</reference>
<reference key="2">
    <citation type="journal article" date="2017" name="Plant J.">
        <title>Araport11: a complete reannotation of the Arabidopsis thaliana reference genome.</title>
        <authorList>
            <person name="Cheng C.Y."/>
            <person name="Krishnakumar V."/>
            <person name="Chan A.P."/>
            <person name="Thibaud-Nissen F."/>
            <person name="Schobel S."/>
            <person name="Town C.D."/>
        </authorList>
    </citation>
    <scope>GENOME REANNOTATION</scope>
    <source>
        <strain>cv. Columbia</strain>
    </source>
</reference>
<reference key="3">
    <citation type="submission" date="2006-12" db="EMBL/GenBank/DDBJ databases">
        <title>Arabidopsis ORF clones.</title>
        <authorList>
            <person name="Bautista V.R."/>
            <person name="Kim C.J."/>
            <person name="Chen H."/>
            <person name="Quinitio C."/>
            <person name="Ecker J.R."/>
        </authorList>
    </citation>
    <scope>NUCLEOTIDE SEQUENCE [LARGE SCALE MRNA]</scope>
    <source>
        <strain>cv. Columbia</strain>
    </source>
</reference>
<reference key="4">
    <citation type="submission" date="2006-07" db="EMBL/GenBank/DDBJ databases">
        <title>Large-scale analysis of RIKEN Arabidopsis full-length (RAFL) cDNAs.</title>
        <authorList>
            <person name="Totoki Y."/>
            <person name="Seki M."/>
            <person name="Ishida J."/>
            <person name="Nakajima M."/>
            <person name="Enju A."/>
            <person name="Kamiya A."/>
            <person name="Narusaka M."/>
            <person name="Shin-i T."/>
            <person name="Nakagawa M."/>
            <person name="Sakamoto N."/>
            <person name="Oishi K."/>
            <person name="Kohara Y."/>
            <person name="Kobayashi M."/>
            <person name="Toyoda A."/>
            <person name="Sakaki Y."/>
            <person name="Sakurai T."/>
            <person name="Iida K."/>
            <person name="Akiyama K."/>
            <person name="Satou M."/>
            <person name="Toyoda T."/>
            <person name="Konagaya A."/>
            <person name="Carninci P."/>
            <person name="Kawai J."/>
            <person name="Hayashizaki Y."/>
            <person name="Shinozaki K."/>
        </authorList>
    </citation>
    <scope>NUCLEOTIDE SEQUENCE [LARGE SCALE MRNA] (ISOFORM 2)</scope>
    <source>
        <strain>cv. Columbia</strain>
    </source>
</reference>
<reference key="5">
    <citation type="journal article" date="2013" name="Glycobiology">
        <title>Introduction of a tryptophan side chain into subsite +1 enhances transglycosylation activity of a GH-18 chitinase from Arabidopsis thaliana, AtChiC.</title>
        <authorList>
            <person name="Umemoto N."/>
            <person name="Ohnuma T."/>
            <person name="Mizuhara M."/>
            <person name="Sato H."/>
            <person name="Skriver K."/>
            <person name="Fukamizo T."/>
        </authorList>
    </citation>
    <scope>FUNCTION</scope>
    <scope>MUTAGENESIS OF GLY-99 AND GLU-140</scope>
    <scope>CATALYTIC ACTIVITY</scope>
    <scope>PATHWAY</scope>
</reference>
<reference key="6">
    <citation type="journal article" date="2011" name="Planta">
        <title>A class V chitinase from Arabidopsis thaliana: gene responses, enzymatic properties, and crystallographic analysis.</title>
        <authorList>
            <person name="Ohnuma T."/>
            <person name="Numata T."/>
            <person name="Osawa T."/>
            <person name="Mizuhara M."/>
            <person name="Lampela O."/>
            <person name="Juffer A.H."/>
            <person name="Skriver K."/>
            <person name="Fukamizo T."/>
        </authorList>
    </citation>
    <scope>X-RAY CRYSTALLOGRAPHY (2.01 ANGSTROMS) OF 25-379</scope>
    <scope>FUNCTION</scope>
    <scope>TISSUE SPECIFICITY</scope>
    <scope>INDUCTION BY JASMONIC ACID; ABSCISIC ACID AND SALT</scope>
    <scope>CATALYTIC ACTIVITY</scope>
    <scope>ACTIVE SITE</scope>
    <source>
        <strain>cv. Columbia</strain>
    </source>
</reference>
<keyword id="KW-0002">3D-structure</keyword>
<keyword id="KW-0025">Alternative splicing</keyword>
<keyword id="KW-0119">Carbohydrate metabolism</keyword>
<keyword id="KW-0146">Chitin degradation</keyword>
<keyword id="KW-0325">Glycoprotein</keyword>
<keyword id="KW-0326">Glycosidase</keyword>
<keyword id="KW-0378">Hydrolase</keyword>
<keyword id="KW-0624">Polysaccharide degradation</keyword>
<keyword id="KW-1185">Reference proteome</keyword>
<keyword id="KW-0732">Signal</keyword>
<organism>
    <name type="scientific">Arabidopsis thaliana</name>
    <name type="common">Mouse-ear cress</name>
    <dbReference type="NCBI Taxonomy" id="3702"/>
    <lineage>
        <taxon>Eukaryota</taxon>
        <taxon>Viridiplantae</taxon>
        <taxon>Streptophyta</taxon>
        <taxon>Embryophyta</taxon>
        <taxon>Tracheophyta</taxon>
        <taxon>Spermatophyta</taxon>
        <taxon>Magnoliopsida</taxon>
        <taxon>eudicotyledons</taxon>
        <taxon>Gunneridae</taxon>
        <taxon>Pentapetalae</taxon>
        <taxon>rosids</taxon>
        <taxon>malvids</taxon>
        <taxon>Brassicales</taxon>
        <taxon>Brassicaceae</taxon>
        <taxon>Camelineae</taxon>
        <taxon>Arabidopsis</taxon>
    </lineage>
</organism>
<protein>
    <recommendedName>
        <fullName evidence="6">Class V chitinase</fullName>
        <shortName evidence="6">AtChiC</shortName>
        <ecNumber evidence="4 5">3.2.1.14</ecNumber>
        <ecNumber evidence="4">3.2.1.200</ecNumber>
    </recommendedName>
</protein>
<evidence type="ECO:0000255" key="1"/>
<evidence type="ECO:0000255" key="2">
    <source>
        <dbReference type="PROSITE-ProRule" id="PRU00498"/>
    </source>
</evidence>
<evidence type="ECO:0000255" key="3">
    <source>
        <dbReference type="PROSITE-ProRule" id="PRU01258"/>
    </source>
</evidence>
<evidence type="ECO:0000269" key="4">
    <source>
    </source>
</evidence>
<evidence type="ECO:0000269" key="5">
    <source>
    </source>
</evidence>
<evidence type="ECO:0000303" key="6">
    <source>
    </source>
</evidence>
<evidence type="ECO:0000305" key="7"/>
<evidence type="ECO:0000305" key="8">
    <source>
    </source>
</evidence>
<evidence type="ECO:0000312" key="9">
    <source>
        <dbReference type="Araport" id="AT4G19810"/>
    </source>
</evidence>
<evidence type="ECO:0000312" key="10">
    <source>
        <dbReference type="EMBL" id="CAA19698.1"/>
    </source>
</evidence>
<evidence type="ECO:0007829" key="11">
    <source>
        <dbReference type="PDB" id="3AQU"/>
    </source>
</evidence>
<sequence>MSSTKLISLIVSITFFLTLQCSMAQTVVKASYWFPASEFPVTDIDSSLFTHLFCAFADLNSQTNQVTVSSANQPKFSTFTQTVQRRNPSVKTLLSIGGGIADKTAYASMASNPTSRKSFIDSSIRVARSYGFHGLDLDWEYPSSATEMTNFGTLLREWRSAVVAEASSSGKPRLLLAAAVFYSNNYYSVLYPVSAVASSLDWVNLMAYDFYGPGWSRVTGPPAALFDPSNAGPSGDAGTRSWIQAGLPAKKAVLGFPYYGYAWRLTNANSHSYYAPTTGAAISPDGSIGYGQIRKFIVDNGATTVYNSTVVGDYCYAGTNWIGYDDNQSIVTKVRYAKQRGLLGYFSWHVGADDNSGLSRAASQAWDATTATTRTIQKV</sequence>
<gene>
    <name evidence="6" type="primary">ChiC</name>
    <name evidence="9" type="ordered locus">At4g19810</name>
    <name evidence="10" type="ORF">T16H5.170</name>
</gene>